<evidence type="ECO:0000255" key="1">
    <source>
        <dbReference type="HAMAP-Rule" id="MF_01590"/>
    </source>
</evidence>
<sequence length="323" mass="37025">MIDFGNFYSLIAKNHLSHWLETLPAQIANWQREQQHGLFKQWSNAVEFLPEIKPYRLDLLHSVTAESEEPLSAGQIKRIETLMRNLMPWRKGPFSLYGVNIDTEWRSDWKWDRVMPHLSDLTGRTILDVGCGSGYHMWRMIGAGAHLAVGIDPTQLFLCQFEAVRKLLGNDQRAHLLPLGIEQLPALKAFDTVFSMGVLYHRRSPLEHLWQLKDQLVNEGELVLETLVIDGDENTVLVPGDRYAQMRNVYFIPSALALKNWLKKCGFVDIRIADVSVTTTEEQRRTEWMVTESLADFLDPHDPGKTVEGYPAPKRAVLIARKP</sequence>
<comment type="function">
    <text evidence="1">Catalyzes carboxymethyl transfer from carboxy-S-adenosyl-L-methionine (Cx-SAM) to 5-hydroxyuridine (ho5U) to form 5-carboxymethoxyuridine (cmo5U) at position 34 in tRNAs.</text>
</comment>
<comment type="catalytic activity">
    <reaction evidence="1">
        <text>carboxy-S-adenosyl-L-methionine + 5-hydroxyuridine(34) in tRNA = 5-carboxymethoxyuridine(34) in tRNA + S-adenosyl-L-homocysteine + H(+)</text>
        <dbReference type="Rhea" id="RHEA:52848"/>
        <dbReference type="Rhea" id="RHEA-COMP:13381"/>
        <dbReference type="Rhea" id="RHEA-COMP:13383"/>
        <dbReference type="ChEBI" id="CHEBI:15378"/>
        <dbReference type="ChEBI" id="CHEBI:57856"/>
        <dbReference type="ChEBI" id="CHEBI:134278"/>
        <dbReference type="ChEBI" id="CHEBI:136877"/>
        <dbReference type="ChEBI" id="CHEBI:136879"/>
    </reaction>
</comment>
<comment type="subunit">
    <text evidence="1">Homotetramer.</text>
</comment>
<comment type="similarity">
    <text evidence="1">Belongs to the class I-like SAM-binding methyltransferase superfamily. CmoB family.</text>
</comment>
<name>CMOB_ECOL6</name>
<dbReference type="EC" id="2.5.1.-" evidence="1"/>
<dbReference type="EMBL" id="AE014075">
    <property type="protein sequence ID" value="AAN80742.1"/>
    <property type="molecule type" value="Genomic_DNA"/>
</dbReference>
<dbReference type="RefSeq" id="WP_000564738.1">
    <property type="nucleotide sequence ID" value="NZ_CP051263.1"/>
</dbReference>
<dbReference type="SMR" id="Q8FGQ5"/>
<dbReference type="STRING" id="199310.c2285"/>
<dbReference type="KEGG" id="ecc:c2285"/>
<dbReference type="eggNOG" id="COG0500">
    <property type="taxonomic scope" value="Bacteria"/>
</dbReference>
<dbReference type="HOGENOM" id="CLU_052665_0_0_6"/>
<dbReference type="BioCyc" id="ECOL199310:C2285-MONOMER"/>
<dbReference type="Proteomes" id="UP000001410">
    <property type="component" value="Chromosome"/>
</dbReference>
<dbReference type="GO" id="GO:0008168">
    <property type="term" value="F:methyltransferase activity"/>
    <property type="evidence" value="ECO:0007669"/>
    <property type="project" value="TreeGrafter"/>
</dbReference>
<dbReference type="GO" id="GO:0016765">
    <property type="term" value="F:transferase activity, transferring alkyl or aryl (other than methyl) groups"/>
    <property type="evidence" value="ECO:0007669"/>
    <property type="project" value="UniProtKB-UniRule"/>
</dbReference>
<dbReference type="GO" id="GO:0002098">
    <property type="term" value="P:tRNA wobble uridine modification"/>
    <property type="evidence" value="ECO:0007669"/>
    <property type="project" value="InterPro"/>
</dbReference>
<dbReference type="CDD" id="cd02440">
    <property type="entry name" value="AdoMet_MTases"/>
    <property type="match status" value="1"/>
</dbReference>
<dbReference type="FunFam" id="3.40.50.150:FF:000080">
    <property type="entry name" value="tRNA U34 carboxymethyltransferase"/>
    <property type="match status" value="1"/>
</dbReference>
<dbReference type="Gene3D" id="3.40.50.150">
    <property type="entry name" value="Vaccinia Virus protein VP39"/>
    <property type="match status" value="1"/>
</dbReference>
<dbReference type="HAMAP" id="MF_01590">
    <property type="entry name" value="tRNA_carboxymethyltr_CmoB"/>
    <property type="match status" value="1"/>
</dbReference>
<dbReference type="InterPro" id="IPR010017">
    <property type="entry name" value="CmoB"/>
</dbReference>
<dbReference type="InterPro" id="IPR027555">
    <property type="entry name" value="Mo5U34_MeTrfas-like"/>
</dbReference>
<dbReference type="InterPro" id="IPR029063">
    <property type="entry name" value="SAM-dependent_MTases_sf"/>
</dbReference>
<dbReference type="NCBIfam" id="NF011650">
    <property type="entry name" value="PRK15068.1"/>
    <property type="match status" value="1"/>
</dbReference>
<dbReference type="NCBIfam" id="TIGR00452">
    <property type="entry name" value="tRNA 5-methoxyuridine(34)/uridine 5-oxyacetic acid(34) synthase CmoB"/>
    <property type="match status" value="1"/>
</dbReference>
<dbReference type="PANTHER" id="PTHR43464">
    <property type="entry name" value="METHYLTRANSFERASE"/>
    <property type="match status" value="1"/>
</dbReference>
<dbReference type="PANTHER" id="PTHR43464:SF95">
    <property type="entry name" value="TRNA U34 CARBOXYMETHYLTRANSFERASE"/>
    <property type="match status" value="1"/>
</dbReference>
<dbReference type="Pfam" id="PF08003">
    <property type="entry name" value="Methyltransf_9"/>
    <property type="match status" value="1"/>
</dbReference>
<dbReference type="SUPFAM" id="SSF53335">
    <property type="entry name" value="S-adenosyl-L-methionine-dependent methyltransferases"/>
    <property type="match status" value="1"/>
</dbReference>
<gene>
    <name evidence="1" type="primary">cmoB</name>
    <name type="ordered locus">c2285</name>
</gene>
<accession>Q8FGQ5</accession>
<feature type="chain" id="PRO_0000313918" description="tRNA U34 carboxymethyltransferase">
    <location>
        <begin position="1"/>
        <end position="323"/>
    </location>
</feature>
<feature type="binding site" evidence="1">
    <location>
        <position position="91"/>
    </location>
    <ligand>
        <name>carboxy-S-adenosyl-L-methionine</name>
        <dbReference type="ChEBI" id="CHEBI:134278"/>
    </ligand>
</feature>
<feature type="binding site" evidence="1">
    <location>
        <position position="105"/>
    </location>
    <ligand>
        <name>carboxy-S-adenosyl-L-methionine</name>
        <dbReference type="ChEBI" id="CHEBI:134278"/>
    </ligand>
</feature>
<feature type="binding site" evidence="1">
    <location>
        <position position="110"/>
    </location>
    <ligand>
        <name>carboxy-S-adenosyl-L-methionine</name>
        <dbReference type="ChEBI" id="CHEBI:134278"/>
    </ligand>
</feature>
<feature type="binding site" evidence="1">
    <location>
        <position position="130"/>
    </location>
    <ligand>
        <name>carboxy-S-adenosyl-L-methionine</name>
        <dbReference type="ChEBI" id="CHEBI:134278"/>
    </ligand>
</feature>
<feature type="binding site" evidence="1">
    <location>
        <begin position="152"/>
        <end position="154"/>
    </location>
    <ligand>
        <name>carboxy-S-adenosyl-L-methionine</name>
        <dbReference type="ChEBI" id="CHEBI:134278"/>
    </ligand>
</feature>
<feature type="binding site" evidence="1">
    <location>
        <begin position="181"/>
        <end position="182"/>
    </location>
    <ligand>
        <name>carboxy-S-adenosyl-L-methionine</name>
        <dbReference type="ChEBI" id="CHEBI:134278"/>
    </ligand>
</feature>
<feature type="binding site" evidence="1">
    <location>
        <position position="196"/>
    </location>
    <ligand>
        <name>carboxy-S-adenosyl-L-methionine</name>
        <dbReference type="ChEBI" id="CHEBI:134278"/>
    </ligand>
</feature>
<feature type="binding site" evidence="1">
    <location>
        <position position="200"/>
    </location>
    <ligand>
        <name>carboxy-S-adenosyl-L-methionine</name>
        <dbReference type="ChEBI" id="CHEBI:134278"/>
    </ligand>
</feature>
<feature type="binding site" evidence="1">
    <location>
        <position position="315"/>
    </location>
    <ligand>
        <name>carboxy-S-adenosyl-L-methionine</name>
        <dbReference type="ChEBI" id="CHEBI:134278"/>
    </ligand>
</feature>
<organism>
    <name type="scientific">Escherichia coli O6:H1 (strain CFT073 / ATCC 700928 / UPEC)</name>
    <dbReference type="NCBI Taxonomy" id="199310"/>
    <lineage>
        <taxon>Bacteria</taxon>
        <taxon>Pseudomonadati</taxon>
        <taxon>Pseudomonadota</taxon>
        <taxon>Gammaproteobacteria</taxon>
        <taxon>Enterobacterales</taxon>
        <taxon>Enterobacteriaceae</taxon>
        <taxon>Escherichia</taxon>
    </lineage>
</organism>
<protein>
    <recommendedName>
        <fullName evidence="1">tRNA U34 carboxymethyltransferase</fullName>
        <ecNumber evidence="1">2.5.1.-</ecNumber>
    </recommendedName>
</protein>
<reference key="1">
    <citation type="journal article" date="2002" name="Proc. Natl. Acad. Sci. U.S.A.">
        <title>Extensive mosaic structure revealed by the complete genome sequence of uropathogenic Escherichia coli.</title>
        <authorList>
            <person name="Welch R.A."/>
            <person name="Burland V."/>
            <person name="Plunkett G. III"/>
            <person name="Redford P."/>
            <person name="Roesch P."/>
            <person name="Rasko D."/>
            <person name="Buckles E.L."/>
            <person name="Liou S.-R."/>
            <person name="Boutin A."/>
            <person name="Hackett J."/>
            <person name="Stroud D."/>
            <person name="Mayhew G.F."/>
            <person name="Rose D.J."/>
            <person name="Zhou S."/>
            <person name="Schwartz D.C."/>
            <person name="Perna N.T."/>
            <person name="Mobley H.L.T."/>
            <person name="Donnenberg M.S."/>
            <person name="Blattner F.R."/>
        </authorList>
    </citation>
    <scope>NUCLEOTIDE SEQUENCE [LARGE SCALE GENOMIC DNA]</scope>
    <source>
        <strain>CFT073 / ATCC 700928 / UPEC</strain>
    </source>
</reference>
<keyword id="KW-1185">Reference proteome</keyword>
<keyword id="KW-0808">Transferase</keyword>
<keyword id="KW-0819">tRNA processing</keyword>
<proteinExistence type="inferred from homology"/>